<protein>
    <recommendedName>
        <fullName evidence="1">ATP synthase subunit delta</fullName>
    </recommendedName>
    <alternativeName>
        <fullName evidence="1">ATP synthase F(1) sector subunit delta</fullName>
    </alternativeName>
    <alternativeName>
        <fullName evidence="1">F-type ATPase subunit delta</fullName>
        <shortName evidence="1">F-ATPase subunit delta</shortName>
    </alternativeName>
</protein>
<name>ATPD_PHOV8</name>
<reference key="1">
    <citation type="journal article" date="2007" name="PLoS Biol.">
        <title>Evolution of symbiotic bacteria in the distal human intestine.</title>
        <authorList>
            <person name="Xu J."/>
            <person name="Mahowald M.A."/>
            <person name="Ley R.E."/>
            <person name="Lozupone C.A."/>
            <person name="Hamady M."/>
            <person name="Martens E.C."/>
            <person name="Henrissat B."/>
            <person name="Coutinho P.M."/>
            <person name="Minx P."/>
            <person name="Latreille P."/>
            <person name="Cordum H."/>
            <person name="Van Brunt A."/>
            <person name="Kim K."/>
            <person name="Fulton R.S."/>
            <person name="Fulton L.A."/>
            <person name="Clifton S.W."/>
            <person name="Wilson R.K."/>
            <person name="Knight R.D."/>
            <person name="Gordon J.I."/>
        </authorList>
    </citation>
    <scope>NUCLEOTIDE SEQUENCE [LARGE SCALE GENOMIC DNA]</scope>
    <source>
        <strain>ATCC 8482 / DSM 1447 / JCM 5826 / CCUG 4940 / NBRC 14291 / NCTC 11154</strain>
    </source>
</reference>
<accession>A6L4M3</accession>
<feature type="chain" id="PRO_1000184656" description="ATP synthase subunit delta">
    <location>
        <begin position="1"/>
        <end position="185"/>
    </location>
</feature>
<dbReference type="EMBL" id="CP000139">
    <property type="protein sequence ID" value="ABR40637.1"/>
    <property type="molecule type" value="Genomic_DNA"/>
</dbReference>
<dbReference type="RefSeq" id="WP_005846833.1">
    <property type="nucleotide sequence ID" value="NZ_JANSWM010000059.1"/>
</dbReference>
<dbReference type="SMR" id="A6L4M3"/>
<dbReference type="STRING" id="435590.BVU_2999"/>
<dbReference type="PaxDb" id="435590-BVU_2999"/>
<dbReference type="DNASU" id="5303960"/>
<dbReference type="KEGG" id="bvu:BVU_2999"/>
<dbReference type="eggNOG" id="COG0712">
    <property type="taxonomic scope" value="Bacteria"/>
</dbReference>
<dbReference type="HOGENOM" id="CLU_085114_4_0_10"/>
<dbReference type="BioCyc" id="BVUL435590:G1G59-3122-MONOMER"/>
<dbReference type="Proteomes" id="UP000002861">
    <property type="component" value="Chromosome"/>
</dbReference>
<dbReference type="GO" id="GO:0005886">
    <property type="term" value="C:plasma membrane"/>
    <property type="evidence" value="ECO:0007669"/>
    <property type="project" value="UniProtKB-SubCell"/>
</dbReference>
<dbReference type="GO" id="GO:0045259">
    <property type="term" value="C:proton-transporting ATP synthase complex"/>
    <property type="evidence" value="ECO:0007669"/>
    <property type="project" value="UniProtKB-KW"/>
</dbReference>
<dbReference type="GO" id="GO:0046933">
    <property type="term" value="F:proton-transporting ATP synthase activity, rotational mechanism"/>
    <property type="evidence" value="ECO:0007669"/>
    <property type="project" value="UniProtKB-UniRule"/>
</dbReference>
<dbReference type="Gene3D" id="1.10.520.20">
    <property type="entry name" value="N-terminal domain of the delta subunit of the F1F0-ATP synthase"/>
    <property type="match status" value="1"/>
</dbReference>
<dbReference type="HAMAP" id="MF_01416">
    <property type="entry name" value="ATP_synth_delta_bact"/>
    <property type="match status" value="1"/>
</dbReference>
<dbReference type="InterPro" id="IPR026015">
    <property type="entry name" value="ATP_synth_OSCP/delta_N_sf"/>
</dbReference>
<dbReference type="InterPro" id="IPR000711">
    <property type="entry name" value="ATPase_OSCP/dsu"/>
</dbReference>
<dbReference type="NCBIfam" id="TIGR01145">
    <property type="entry name" value="ATP_synt_delta"/>
    <property type="match status" value="1"/>
</dbReference>
<dbReference type="NCBIfam" id="NF009964">
    <property type="entry name" value="PRK13429.1-3"/>
    <property type="match status" value="1"/>
</dbReference>
<dbReference type="PANTHER" id="PTHR11910">
    <property type="entry name" value="ATP SYNTHASE DELTA CHAIN"/>
    <property type="match status" value="1"/>
</dbReference>
<dbReference type="Pfam" id="PF00213">
    <property type="entry name" value="OSCP"/>
    <property type="match status" value="1"/>
</dbReference>
<dbReference type="PRINTS" id="PR00125">
    <property type="entry name" value="ATPASEDELTA"/>
</dbReference>
<dbReference type="SUPFAM" id="SSF47928">
    <property type="entry name" value="N-terminal domain of the delta subunit of the F1F0-ATP synthase"/>
    <property type="match status" value="1"/>
</dbReference>
<gene>
    <name evidence="1" type="primary">atpH</name>
    <name type="ordered locus">BVU_2999</name>
</gene>
<comment type="function">
    <text evidence="1">F(1)F(0) ATP synthase produces ATP from ADP in the presence of a proton or sodium gradient. F-type ATPases consist of two structural domains, F(1) containing the extramembraneous catalytic core and F(0) containing the membrane proton channel, linked together by a central stalk and a peripheral stalk. During catalysis, ATP synthesis in the catalytic domain of F(1) is coupled via a rotary mechanism of the central stalk subunits to proton translocation.</text>
</comment>
<comment type="function">
    <text evidence="1">This protein is part of the stalk that links CF(0) to CF(1). It either transmits conformational changes from CF(0) to CF(1) or is implicated in proton conduction.</text>
</comment>
<comment type="subunit">
    <text evidence="1">F-type ATPases have 2 components, F(1) - the catalytic core - and F(0) - the membrane proton channel. F(1) has five subunits: alpha(3), beta(3), gamma(1), delta(1), epsilon(1). F(0) has three main subunits: a(1), b(2) and c(10-14). The alpha and beta chains form an alternating ring which encloses part of the gamma chain. F(1) is attached to F(0) by a central stalk formed by the gamma and epsilon chains, while a peripheral stalk is formed by the delta and b chains.</text>
</comment>
<comment type="subcellular location">
    <subcellularLocation>
        <location evidence="1">Cell inner membrane</location>
        <topology evidence="1">Peripheral membrane protein</topology>
    </subcellularLocation>
</comment>
<comment type="similarity">
    <text evidence="1">Belongs to the ATPase delta chain family.</text>
</comment>
<keyword id="KW-0066">ATP synthesis</keyword>
<keyword id="KW-0997">Cell inner membrane</keyword>
<keyword id="KW-1003">Cell membrane</keyword>
<keyword id="KW-0139">CF(1)</keyword>
<keyword id="KW-0375">Hydrogen ion transport</keyword>
<keyword id="KW-0406">Ion transport</keyword>
<keyword id="KW-0472">Membrane</keyword>
<keyword id="KW-0813">Transport</keyword>
<proteinExistence type="inferred from homology"/>
<organism>
    <name type="scientific">Phocaeicola vulgatus (strain ATCC 8482 / DSM 1447 / JCM 5826 / CCUG 4940 / NBRC 14291 / NCTC 11154)</name>
    <name type="common">Bacteroides vulgatus</name>
    <dbReference type="NCBI Taxonomy" id="435590"/>
    <lineage>
        <taxon>Bacteria</taxon>
        <taxon>Pseudomonadati</taxon>
        <taxon>Bacteroidota</taxon>
        <taxon>Bacteroidia</taxon>
        <taxon>Bacteroidales</taxon>
        <taxon>Bacteroidaceae</taxon>
        <taxon>Phocaeicola</taxon>
    </lineage>
</organism>
<evidence type="ECO:0000255" key="1">
    <source>
        <dbReference type="HAMAP-Rule" id="MF_01416"/>
    </source>
</evidence>
<sequence>MYIGVISMRYAKALLAYADEKGTEDTVYEEAGILADSFSRIPELRQALDNPVLPAETKLKLICEAAGGGKVSEELKRFVELVLEERREKFLQFMIMSYIDLYRKQKNISVGKITTVCPVAEEVVNRIRALVVEKTHGTVEFKTKIDPKLEGGFIFEIGTYRLDASVANQIKRVKQQFIAKNRRIV</sequence>